<organism>
    <name type="scientific">Gorilla gorilla gorilla</name>
    <name type="common">Western lowland gorilla</name>
    <dbReference type="NCBI Taxonomy" id="9595"/>
    <lineage>
        <taxon>Eukaryota</taxon>
        <taxon>Metazoa</taxon>
        <taxon>Chordata</taxon>
        <taxon>Craniata</taxon>
        <taxon>Vertebrata</taxon>
        <taxon>Euteleostomi</taxon>
        <taxon>Mammalia</taxon>
        <taxon>Eutheria</taxon>
        <taxon>Euarchontoglires</taxon>
        <taxon>Primates</taxon>
        <taxon>Haplorrhini</taxon>
        <taxon>Catarrhini</taxon>
        <taxon>Hominidae</taxon>
        <taxon>Gorilla</taxon>
    </lineage>
</organism>
<name>APEX1_GORGO</name>
<feature type="chain" id="PRO_0000285545" description="DNA repair nuclease/redox regulator APEX1">
    <location>
        <begin position="1"/>
        <end position="318"/>
    </location>
</feature>
<feature type="chain" id="PRO_0000402807" description="DNA repair nuclease/redox regulator APEX1, mitochondrial">
    <location>
        <begin position="32"/>
        <end position="318"/>
    </location>
</feature>
<feature type="region of interest" description="Disordered" evidence="6">
    <location>
        <begin position="1"/>
        <end position="60"/>
    </location>
</feature>
<feature type="region of interest" description="Necessary for interaction with YBX1, binding to RNA, association together with NPM1 to rRNA, endoribonuclease activity on abasic RNA and localization in the nucleoli" evidence="1">
    <location>
        <begin position="1"/>
        <end position="33"/>
    </location>
</feature>
<feature type="region of interest" description="Necessary for interaction with NPM1 and for efficient rRNA binding" evidence="1">
    <location>
        <begin position="23"/>
        <end position="33"/>
    </location>
</feature>
<feature type="region of interest" description="Mitochondrial targeting sequence (MTS)" evidence="1">
    <location>
        <begin position="289"/>
        <end position="318"/>
    </location>
</feature>
<feature type="short sequence motif" description="Nuclear localization signal (NLS)" evidence="1">
    <location>
        <begin position="8"/>
        <end position="13"/>
    </location>
</feature>
<feature type="short sequence motif" description="Nuclear export signal (NES)" evidence="1">
    <location>
        <begin position="64"/>
        <end position="80"/>
    </location>
</feature>
<feature type="compositionally biased region" description="Basic and acidic residues" evidence="6">
    <location>
        <begin position="16"/>
        <end position="38"/>
    </location>
</feature>
<feature type="active site" evidence="1">
    <location>
        <position position="171"/>
    </location>
</feature>
<feature type="active site" description="Proton donor/acceptor" evidence="1">
    <location>
        <position position="210"/>
    </location>
</feature>
<feature type="binding site" evidence="1">
    <location>
        <position position="70"/>
    </location>
    <ligand>
        <name>Mg(2+)</name>
        <dbReference type="ChEBI" id="CHEBI:18420"/>
        <label>1</label>
    </ligand>
</feature>
<feature type="binding site" evidence="1">
    <location>
        <position position="96"/>
    </location>
    <ligand>
        <name>Mg(2+)</name>
        <dbReference type="ChEBI" id="CHEBI:18420"/>
        <label>1</label>
    </ligand>
</feature>
<feature type="binding site" evidence="1">
    <location>
        <position position="210"/>
    </location>
    <ligand>
        <name>Mg(2+)</name>
        <dbReference type="ChEBI" id="CHEBI:18420"/>
        <label>2</label>
    </ligand>
</feature>
<feature type="binding site" evidence="1">
    <location>
        <position position="212"/>
    </location>
    <ligand>
        <name>Mg(2+)</name>
        <dbReference type="ChEBI" id="CHEBI:18420"/>
        <label>2</label>
    </ligand>
</feature>
<feature type="binding site" evidence="1">
    <location>
        <position position="308"/>
    </location>
    <ligand>
        <name>Mg(2+)</name>
        <dbReference type="ChEBI" id="CHEBI:18420"/>
        <label>1</label>
    </ligand>
</feature>
<feature type="site" description="Cleavage; by granzyme A" evidence="1">
    <location>
        <begin position="31"/>
        <end position="32"/>
    </location>
</feature>
<feature type="site" description="Transition state stabilizer" evidence="1">
    <location>
        <position position="212"/>
    </location>
</feature>
<feature type="site" description="Important for catalytic activity" evidence="1">
    <location>
        <position position="283"/>
    </location>
</feature>
<feature type="site" description="Interaction with DNA substrate" evidence="1">
    <location>
        <position position="309"/>
    </location>
</feature>
<feature type="modified residue" description="N6-acetyllysine; by EP300" evidence="3">
    <location>
        <position position="6"/>
    </location>
</feature>
<feature type="modified residue" description="N6-acetyllysine; by EP300" evidence="3">
    <location>
        <position position="7"/>
    </location>
</feature>
<feature type="modified residue" description="N6-acetyllysine" evidence="3">
    <location>
        <position position="27"/>
    </location>
</feature>
<feature type="modified residue" description="N6-acetyllysine" evidence="3">
    <location>
        <position position="31"/>
    </location>
</feature>
<feature type="modified residue" description="N6-acetyllysine" evidence="3">
    <location>
        <position position="32"/>
    </location>
</feature>
<feature type="modified residue" description="N6-acetyllysine" evidence="3">
    <location>
        <position position="35"/>
    </location>
</feature>
<feature type="modified residue" description="Phosphoserine" evidence="3">
    <location>
        <position position="54"/>
    </location>
</feature>
<feature type="modified residue" description="S-nitrosocysteine; alternate" evidence="3">
    <location>
        <position position="65"/>
    </location>
</feature>
<feature type="modified residue" description="S-nitrosocysteine; alternate" evidence="3">
    <location>
        <position position="93"/>
    </location>
</feature>
<feature type="modified residue" description="N6-acetyllysine" evidence="3">
    <location>
        <position position="197"/>
    </location>
</feature>
<feature type="modified residue" description="Phosphothreonine; by CDK5" evidence="4">
    <location>
        <position position="233"/>
    </location>
</feature>
<feature type="modified residue" description="S-nitrosocysteine" evidence="3">
    <location>
        <position position="310"/>
    </location>
</feature>
<feature type="disulfide bond" description="Alternate" evidence="1">
    <location>
        <begin position="65"/>
        <end position="93"/>
    </location>
</feature>
<dbReference type="EC" id="3.1.11.2" evidence="3"/>
<dbReference type="EC" id="3.1.21.-" evidence="3"/>
<dbReference type="EMBL" id="DQ976454">
    <property type="protein sequence ID" value="ABM46644.1"/>
    <property type="molecule type" value="Genomic_DNA"/>
</dbReference>
<dbReference type="BMRB" id="A1YES6"/>
<dbReference type="FunCoup" id="A1YES6">
    <property type="interactions" value="2146"/>
</dbReference>
<dbReference type="STRING" id="9593.ENSGGOP00000044042"/>
<dbReference type="eggNOG" id="KOG1294">
    <property type="taxonomic scope" value="Eukaryota"/>
</dbReference>
<dbReference type="InParanoid" id="A1YES6"/>
<dbReference type="Proteomes" id="UP000001519">
    <property type="component" value="Unplaced"/>
</dbReference>
<dbReference type="GO" id="GO:0005737">
    <property type="term" value="C:cytoplasm"/>
    <property type="evidence" value="ECO:0000250"/>
    <property type="project" value="UniProtKB"/>
</dbReference>
<dbReference type="GO" id="GO:0005783">
    <property type="term" value="C:endoplasmic reticulum"/>
    <property type="evidence" value="ECO:0007669"/>
    <property type="project" value="UniProtKB-SubCell"/>
</dbReference>
<dbReference type="GO" id="GO:0005739">
    <property type="term" value="C:mitochondrion"/>
    <property type="evidence" value="ECO:0000250"/>
    <property type="project" value="UniProtKB"/>
</dbReference>
<dbReference type="GO" id="GO:0016607">
    <property type="term" value="C:nuclear speck"/>
    <property type="evidence" value="ECO:0000250"/>
    <property type="project" value="UniProtKB"/>
</dbReference>
<dbReference type="GO" id="GO:0005730">
    <property type="term" value="C:nucleolus"/>
    <property type="evidence" value="ECO:0000250"/>
    <property type="project" value="UniProtKB"/>
</dbReference>
<dbReference type="GO" id="GO:0005654">
    <property type="term" value="C:nucleoplasm"/>
    <property type="evidence" value="ECO:0000250"/>
    <property type="project" value="UniProtKB"/>
</dbReference>
<dbReference type="GO" id="GO:0005634">
    <property type="term" value="C:nucleus"/>
    <property type="evidence" value="ECO:0000250"/>
    <property type="project" value="UniProtKB"/>
</dbReference>
<dbReference type="GO" id="GO:0008408">
    <property type="term" value="F:3'-5' exonuclease activity"/>
    <property type="evidence" value="ECO:0000250"/>
    <property type="project" value="UniProtKB"/>
</dbReference>
<dbReference type="GO" id="GO:0031490">
    <property type="term" value="F:chromatin DNA binding"/>
    <property type="evidence" value="ECO:0000250"/>
    <property type="project" value="UniProtKB"/>
</dbReference>
<dbReference type="GO" id="GO:0052720">
    <property type="term" value="F:class II DNA-(apurinic or apyrimidinic site) endonuclease activity"/>
    <property type="evidence" value="ECO:0000250"/>
    <property type="project" value="UniProtKB"/>
</dbReference>
<dbReference type="GO" id="GO:0003684">
    <property type="term" value="F:damaged DNA binding"/>
    <property type="evidence" value="ECO:0000250"/>
    <property type="project" value="UniProtKB"/>
</dbReference>
<dbReference type="GO" id="GO:0140431">
    <property type="term" value="F:DNA-(abasic site) binding"/>
    <property type="evidence" value="ECO:0000250"/>
    <property type="project" value="UniProtKB"/>
</dbReference>
<dbReference type="GO" id="GO:0003906">
    <property type="term" value="F:DNA-(apurinic or apyrimidinic site) endonuclease activity"/>
    <property type="evidence" value="ECO:0000250"/>
    <property type="project" value="UniProtKB"/>
</dbReference>
<dbReference type="GO" id="GO:0008311">
    <property type="term" value="F:double-stranded DNA 3'-5' DNA exonuclease activity"/>
    <property type="evidence" value="ECO:0000318"/>
    <property type="project" value="GO_Central"/>
</dbReference>
<dbReference type="GO" id="GO:0046872">
    <property type="term" value="F:metal ion binding"/>
    <property type="evidence" value="ECO:0007669"/>
    <property type="project" value="UniProtKB-KW"/>
</dbReference>
<dbReference type="GO" id="GO:0016491">
    <property type="term" value="F:oxidoreductase activity"/>
    <property type="evidence" value="ECO:0000250"/>
    <property type="project" value="UniProtKB"/>
</dbReference>
<dbReference type="GO" id="GO:0008081">
    <property type="term" value="F:phosphoric diester hydrolase activity"/>
    <property type="evidence" value="ECO:0000318"/>
    <property type="project" value="GO_Central"/>
</dbReference>
<dbReference type="GO" id="GO:0003723">
    <property type="term" value="F:RNA binding"/>
    <property type="evidence" value="ECO:0007669"/>
    <property type="project" value="UniProtKB-KW"/>
</dbReference>
<dbReference type="GO" id="GO:0016890">
    <property type="term" value="F:site-specific endodeoxyribonuclease activity, specific for altered base"/>
    <property type="evidence" value="ECO:0000250"/>
    <property type="project" value="UniProtKB"/>
</dbReference>
<dbReference type="GO" id="GO:0006284">
    <property type="term" value="P:base-excision repair"/>
    <property type="evidence" value="ECO:0000318"/>
    <property type="project" value="GO_Central"/>
</dbReference>
<dbReference type="GO" id="GO:0006310">
    <property type="term" value="P:DNA recombination"/>
    <property type="evidence" value="ECO:0007669"/>
    <property type="project" value="UniProtKB-KW"/>
</dbReference>
<dbReference type="GO" id="GO:0006281">
    <property type="term" value="P:DNA repair"/>
    <property type="evidence" value="ECO:0000250"/>
    <property type="project" value="UniProtKB"/>
</dbReference>
<dbReference type="GO" id="GO:0044029">
    <property type="term" value="P:positive regulation of gene expression via chromosomal CpG island demethylation"/>
    <property type="evidence" value="ECO:0000250"/>
    <property type="project" value="UniProtKB"/>
</dbReference>
<dbReference type="GO" id="GO:0042981">
    <property type="term" value="P:regulation of apoptotic process"/>
    <property type="evidence" value="ECO:0000250"/>
    <property type="project" value="UniProtKB"/>
</dbReference>
<dbReference type="GO" id="GO:0043488">
    <property type="term" value="P:regulation of mRNA stability"/>
    <property type="evidence" value="ECO:0000250"/>
    <property type="project" value="UniProtKB"/>
</dbReference>
<dbReference type="CDD" id="cd09087">
    <property type="entry name" value="Ape1-like_AP-endo"/>
    <property type="match status" value="1"/>
</dbReference>
<dbReference type="FunFam" id="3.60.10.10:FF:000009">
    <property type="entry name" value="DNA-(apurinic or apyrimidinic site) lyase"/>
    <property type="match status" value="1"/>
</dbReference>
<dbReference type="Gene3D" id="3.60.10.10">
    <property type="entry name" value="Endonuclease/exonuclease/phosphatase"/>
    <property type="match status" value="1"/>
</dbReference>
<dbReference type="InterPro" id="IPR004808">
    <property type="entry name" value="AP_endonuc_1"/>
</dbReference>
<dbReference type="InterPro" id="IPR020847">
    <property type="entry name" value="AP_endonuclease_F1_BS"/>
</dbReference>
<dbReference type="InterPro" id="IPR020848">
    <property type="entry name" value="AP_endonuclease_F1_CS"/>
</dbReference>
<dbReference type="InterPro" id="IPR036691">
    <property type="entry name" value="Endo/exonu/phosph_ase_sf"/>
</dbReference>
<dbReference type="InterPro" id="IPR005135">
    <property type="entry name" value="Endo/exonuclease/phosphatase"/>
</dbReference>
<dbReference type="NCBIfam" id="TIGR00195">
    <property type="entry name" value="exoDNase_III"/>
    <property type="match status" value="1"/>
</dbReference>
<dbReference type="NCBIfam" id="TIGR00633">
    <property type="entry name" value="xth"/>
    <property type="match status" value="1"/>
</dbReference>
<dbReference type="PANTHER" id="PTHR22748">
    <property type="entry name" value="AP ENDONUCLEASE"/>
    <property type="match status" value="1"/>
</dbReference>
<dbReference type="PANTHER" id="PTHR22748:SF6">
    <property type="entry name" value="DNA-(APURINIC OR APYRIMIDINIC SITE) ENDONUCLEASE"/>
    <property type="match status" value="1"/>
</dbReference>
<dbReference type="Pfam" id="PF03372">
    <property type="entry name" value="Exo_endo_phos"/>
    <property type="match status" value="1"/>
</dbReference>
<dbReference type="SUPFAM" id="SSF56219">
    <property type="entry name" value="DNase I-like"/>
    <property type="match status" value="1"/>
</dbReference>
<dbReference type="PROSITE" id="PS00726">
    <property type="entry name" value="AP_NUCLEASE_F1_1"/>
    <property type="match status" value="1"/>
</dbReference>
<dbReference type="PROSITE" id="PS00727">
    <property type="entry name" value="AP_NUCLEASE_F1_2"/>
    <property type="match status" value="1"/>
</dbReference>
<dbReference type="PROSITE" id="PS00728">
    <property type="entry name" value="AP_NUCLEASE_F1_3"/>
    <property type="match status" value="1"/>
</dbReference>
<dbReference type="PROSITE" id="PS51435">
    <property type="entry name" value="AP_NUCLEASE_F1_4"/>
    <property type="match status" value="1"/>
</dbReference>
<sequence>MPKRGKKGAVAEDGDELKTEPEAKKSKTAAKKNDKEAAGEGPALYEDPPDQKTSPSGKPATLKICSWNVDGLRAWIKKKGLDWVKEEAPDILCLQETKCSENKLPAELQELPGLSYQYWSAPXXKEGYSGVGLLSRQCPLKVSYGIGEEEHDQEGRVIVAEFDSFVLVTAYVPNAGRGLVRLEYRQRWDEAFRRFLKGLASRKPLVLCGDLNVAHEEIDLRNPKGNKKNAGFTPQERQGFGELLQAVPLADSFRHLYPNTPYAYTFWTYMMNARSKNVGWRLDYFLLSHSLLPALCDSKIRSKALGSDHCPITLYLAL</sequence>
<reference key="1">
    <citation type="submission" date="2006-08" db="EMBL/GenBank/DDBJ databases">
        <title>Positive selection in transcription factor genes on the human lineage.</title>
        <authorList>
            <person name="Nickel G.C."/>
            <person name="Tefft D.L."/>
            <person name="Trevarthen K."/>
            <person name="Funt J."/>
            <person name="Adams M.D."/>
        </authorList>
    </citation>
    <scope>NUCLEOTIDE SEQUENCE [GENOMIC DNA]</scope>
</reference>
<evidence type="ECO:0000250" key="1"/>
<evidence type="ECO:0000250" key="2">
    <source>
        <dbReference type="UniProtKB" id="P23196"/>
    </source>
</evidence>
<evidence type="ECO:0000250" key="3">
    <source>
        <dbReference type="UniProtKB" id="P27695"/>
    </source>
</evidence>
<evidence type="ECO:0000250" key="4">
    <source>
        <dbReference type="UniProtKB" id="P28352"/>
    </source>
</evidence>
<evidence type="ECO:0000255" key="5">
    <source>
        <dbReference type="PROSITE-ProRule" id="PRU00764"/>
    </source>
</evidence>
<evidence type="ECO:0000256" key="6">
    <source>
        <dbReference type="SAM" id="MobiDB-lite"/>
    </source>
</evidence>
<evidence type="ECO:0000305" key="7"/>
<gene>
    <name type="primary">APEX1</name>
    <name type="synonym">APE</name>
    <name type="synonym">APEX</name>
    <name type="synonym">BAP1</name>
    <name type="synonym">REF1</name>
</gene>
<accession>A1YES6</accession>
<comment type="function">
    <text evidence="3">Multifunctional protein that plays a central role in the cellular response to oxidative stress. The two major activities of APEX1 are DNA repair and redox regulation of transcriptional factors. Functions as an apurinic/apyrimidinic (AP) endodeoxyribonuclease in the DNA base excision repair (BER) pathway of DNA lesions induced by oxidative and alkylating agents. Initiates repair of AP sites in DNA by catalyzing hydrolytic incision of the phosphodiester backbone immediately adjacent to the damage, generating a single-strand break with 5'-deoxyribose phosphate and 3'-hydroxyl ends. Also incises at AP sites in the DNA strand of DNA/RNA hybrids, single-stranded DNA regions of R-loop structures, and single-stranded RNA molecules. Has 3'-5' exoribonuclease activity on mismatched deoxyribonucleotides at the 3' termini of nicked or gapped DNA molecules during short-patch BER. Possesses DNA 3' phosphodiesterase activity capable of removing lesions (such as phosphoglycolate) blocking the 3' side of DNA strand breaks. May also play a role in the epigenetic regulation of gene expression by participating in DNA demethylation. Acts as a loading factor for POLB onto non-incised AP sites in DNA and stimulates the 5'-terminal deoxyribose 5'-phosphate (dRp) excision activity of POLB. Plays a role in the protection from granzyme-mediated cellular repair leading to cell death. Also involved in the DNA cleavage step of class switch recombination (CSR). On the other hand, APEX1 also exerts reversible nuclear redox activity to regulate DNA binding affinity and transcriptional activity of transcriptional factors by controlling the redox status of their DNA-binding domain, such as the FOS/JUN AP-1 complex after exposure to IR. Involved in calcium-dependent down-regulation of parathyroid hormone (PTH) expression by binding to negative calcium response elements (nCaREs). Together with HNRNPL or the dimer XRCC5/XRCC6, associates with nCaRE, acting as an activator of transcriptional repression. Stimulates the YBX1-mediated MDR1 promoter activity, when acetylated at Lys-6 and Lys-7, leading to drug resistance. Also acts as an endoribonuclease involved in the control of single-stranded RNA metabolism. Plays a role in regulating MYC mRNA turnover by preferentially cleaving in between UA and CA dinucleotides of the MYC coding region determinant (CRD). In association with NMD1, plays a role in the rRNA quality control process during cell cycle progression. Associates, together with YBX1, on the MDR1 promoter. Together with NPM1, associates with rRNA. Binds DNA and RNA (By similarity).</text>
</comment>
<comment type="catalytic activity">
    <reaction evidence="3">
        <text>Exonucleolytic cleavage in the 3'- to 5'-direction to yield nucleoside 5'-phosphates.</text>
        <dbReference type="EC" id="3.1.11.2"/>
    </reaction>
</comment>
<comment type="cofactor">
    <cofactor evidence="3">
        <name>Mg(2+)</name>
        <dbReference type="ChEBI" id="CHEBI:18420"/>
    </cofactor>
    <cofactor evidence="3">
        <name>Mn(2+)</name>
        <dbReference type="ChEBI" id="CHEBI:29035"/>
    </cofactor>
    <text evidence="3">Probably binds two magnesium or manganese ions per subunit.</text>
</comment>
<comment type="activity regulation">
    <text evidence="3">NPM1 stimulates endodeoxyribonuclease activity on double-stranded DNA with AP sites, but inhibits endoribonuclease activity on single-stranded RNA containing AP sites.</text>
</comment>
<comment type="subunit">
    <text evidence="3">Monomer. Homodimer; disulfide-linked. Component of the SET complex, composed of at least APEX1, SET, ANP32A, HMGB2, NME1 and TREX1. Associates with the dimer XRCC5/XRCC6 in a DNA-dependent manner. Interacts with SIRT1; the interaction is increased in the context of genotoxic stress. Interacts with HDAC1, HDAC2 and HDAC3; the interactions are not dependent on the APEX1 acetylation status. Interacts with XRCC1; the interaction is induced by SIRT1 and increased with the APEX1 acetylated form. Interacts with NPM1 (via N-terminal domain); the interaction is RNA-dependent and decreases in hydrogen peroxide-damaged cells. Interacts (via N-terminus) with YBX1 (via C-terminus); the interaction is increased in presence of APEX1 acetylated at Lys-6 and Lys-7. Interacts with HNRNPL; the interaction is DNA-dependent. Interacts (via N-terminus) with KPNA1 and KPNA2. Interacts with TXN; the interaction stimulates the FOS/JUN AP-1 complex DNA-binding activity in a redox-dependent manner. Interacts with GZMA, KRT8, MDM2, POLB, PRDX6, PRPF19, RPLP0, TOMM20 and WDR77. Binds to CDK5 (By similarity).</text>
</comment>
<comment type="subcellular location">
    <subcellularLocation>
        <location>Nucleus</location>
    </subcellularLocation>
    <subcellularLocation>
        <location evidence="1">Nucleus</location>
        <location evidence="1">Nucleolus</location>
    </subcellularLocation>
    <subcellularLocation>
        <location evidence="5">Nucleus speckle</location>
    </subcellularLocation>
    <subcellularLocation>
        <location evidence="1">Endoplasmic reticulum</location>
    </subcellularLocation>
    <subcellularLocation>
        <location evidence="5">Cytoplasm</location>
    </subcellularLocation>
    <text evidence="1">Detected in the cytoplasm of B-cells stimulated to switch. Colocalized with SIRT1 in the nucleus. Colocalized with YBX1 in nuclear speckles after genotoxic stress. Together with OGG1 is recruited to nuclear speckles in UVA-irradiated cells. Colocalized with nucleolin and NPM1 in the nucleolus. Its nucleolar localization is cell cycle dependent and requires active rRNA transcription (By similarity). Colocalized with calreticulin in the endoplasmic reticulum. Translocation from the nucleus to the cytoplasm is stimulated in presence of nitric oxide (NO) and function in a CRM1-dependent manner, possibly as a consequence of demasking a nuclear export signal (amino acid position 64-80). S-nitrosylation at Cys-93 and Cys-310 regulates its nuclear-cytosolic shuttling. Ubiquitinated form is localized predominantly in the cytoplasm (By similarity).</text>
</comment>
<comment type="subcellular location">
    <molecule>DNA repair nuclease/redox regulator APEX1, mitochondrial</molecule>
    <subcellularLocation>
        <location>Mitochondrion</location>
    </subcellularLocation>
    <text evidence="1">Translocation from the cytoplasm to the mitochondria is mediated by ROS signaling and cleavage mediated by granzyme A. Tom20-dependent translocated mitochondrial APEX1 level is significantly increased after genotoxic stress. The cleaved APEX2 is only detected in mitochondria (By similarity).</text>
</comment>
<comment type="domain">
    <text evidence="1">The N-terminus contains the redox activity while the C-terminus exerts the DNA AP-endodeoxyribonuclease activity; both function are independent in their actions. An unconventional mitochondrial targeting sequence (MTS) is harbored within the C-terminus, that appears to be masked by the N-terminal sequence containing the nuclear localization signal (NLS), that probably blocks the interaction between the MTS and Tom proteins (By similarity).</text>
</comment>
<comment type="PTM">
    <text evidence="3">Phosphorylated. Phosphorylation by kinase PKC or casein kinase CK2 results in enhanced redox activity that stimulates binding of the FOS/JUN AP-1 complex to its cognate binding site. AP-endodeoxyribonuclease activity is not affected by CK2-mediated phosphorylation. Phosphorylation of Thr-233 by CDK5 in response to MPP(+)/MPTP (1-methyl-4-phenylpyridinium) reduces AP-endodeoxyribonuclease activity resulting in accumulation of DNA damage and contributing to neuronal death (By similarity).</text>
</comment>
<comment type="PTM">
    <text evidence="3">Acetylated on Lys-6 and Lys-7. Acetylation is increased by the transcriptional coactivator EP300 acetyltransferase, genotoxic agents like H(2)O(2) and methyl methanesulfonate (MMS). Acetylation increases its binding affinity to the negative calcium response element (nCaRE) DNA promoter. The acetylated form induces a stronger binding of YBX1 to the Y-box sequence in the MDR1 promoter than the unacetylated form. Deacetylated on lysines. Lys-6 and Lys-7 are deacetylated by SIRT1 (By similarity).</text>
</comment>
<comment type="PTM">
    <text evidence="3">Cleaved at Lys-31 by granzyme A to create the mitochondrial form; leading in reduction of binding to DNA, AP endodeoxyribonuclease activity, redox activation of transcription factors and to enhanced cell death. Cleaved by granzyme K; leading to intracellular ROS accumulation and enhanced cell death after oxidative stress (By similarity).</text>
</comment>
<comment type="PTM">
    <text evidence="3">Cys-69 and Cys-93 are nitrosylated in response to nitric oxide (NO) and lead to the exposure of the nuclear export signal (NES).</text>
</comment>
<comment type="PTM">
    <text evidence="3">Ubiquitinated by MDM2; leading to translocation to the cytoplasm and proteasomal degradation.</text>
</comment>
<comment type="miscellaneous">
    <text evidence="2">The specific activity of the cleaved mitochondrial endodeoxyribonuclease appears to be about 3-fold higher than of the full-length form. Extract of mitochondria, but not of nuclei or cytosol, cleaves recombinant APEX1 to generate a mitochondrial APEX1-sized product (By similarity).</text>
</comment>
<comment type="similarity">
    <text evidence="7">Belongs to the DNA repair enzymes AP/ExoA family.</text>
</comment>
<keyword id="KW-0007">Acetylation</keyword>
<keyword id="KW-0010">Activator</keyword>
<keyword id="KW-0165">Cleavage on pair of basic residues</keyword>
<keyword id="KW-0963">Cytoplasm</keyword>
<keyword id="KW-1015">Disulfide bond</keyword>
<keyword id="KW-0227">DNA damage</keyword>
<keyword id="KW-0233">DNA recombination</keyword>
<keyword id="KW-0234">DNA repair</keyword>
<keyword id="KW-0238">DNA-binding</keyword>
<keyword id="KW-0255">Endonuclease</keyword>
<keyword id="KW-0256">Endoplasmic reticulum</keyword>
<keyword id="KW-0269">Exonuclease</keyword>
<keyword id="KW-0378">Hydrolase</keyword>
<keyword id="KW-0460">Magnesium</keyword>
<keyword id="KW-0479">Metal-binding</keyword>
<keyword id="KW-0496">Mitochondrion</keyword>
<keyword id="KW-0540">Nuclease</keyword>
<keyword id="KW-0539">Nucleus</keyword>
<keyword id="KW-0597">Phosphoprotein</keyword>
<keyword id="KW-1185">Reference proteome</keyword>
<keyword id="KW-0678">Repressor</keyword>
<keyword id="KW-0694">RNA-binding</keyword>
<keyword id="KW-0702">S-nitrosylation</keyword>
<keyword id="KW-0804">Transcription</keyword>
<keyword id="KW-0805">Transcription regulation</keyword>
<keyword id="KW-0832">Ubl conjugation</keyword>
<protein>
    <recommendedName>
        <fullName>DNA repair nuclease/redox regulator APEX1</fullName>
        <ecNumber evidence="3">3.1.11.2</ecNumber>
        <ecNumber evidence="3">3.1.21.-</ecNumber>
    </recommendedName>
    <alternativeName>
        <fullName>APEX nuclease</fullName>
        <shortName>APEN</shortName>
    </alternativeName>
    <alternativeName>
        <fullName>Apurinic-apyrimidinic endonuclease 1</fullName>
        <shortName>AP endonuclease 1</shortName>
    </alternativeName>
    <alternativeName>
        <fullName>Redox factor-1</fullName>
        <shortName>REF-1</shortName>
    </alternativeName>
    <component>
        <recommendedName>
            <fullName>DNA repair nuclease/redox regulator APEX1, mitochondrial</fullName>
        </recommendedName>
    </component>
</protein>
<proteinExistence type="inferred from homology"/>